<name>DEOC_STRPB</name>
<reference key="1">
    <citation type="journal article" date="2006" name="Proc. Natl. Acad. Sci. U.S.A.">
        <title>Molecular genetic anatomy of inter- and intraserotype variation in the human bacterial pathogen group A Streptococcus.</title>
        <authorList>
            <person name="Beres S.B."/>
            <person name="Richter E.W."/>
            <person name="Nagiec M.J."/>
            <person name="Sumby P."/>
            <person name="Porcella S.F."/>
            <person name="DeLeo F.R."/>
            <person name="Musser J.M."/>
        </authorList>
    </citation>
    <scope>NUCLEOTIDE SEQUENCE [LARGE SCALE GENOMIC DNA]</scope>
    <source>
        <strain>MGAS2096</strain>
    </source>
</reference>
<protein>
    <recommendedName>
        <fullName evidence="1">Deoxyribose-phosphate aldolase</fullName>
        <shortName evidence="1">DERA</shortName>
        <ecNumber evidence="1">4.1.2.4</ecNumber>
    </recommendedName>
    <alternativeName>
        <fullName evidence="1">2-deoxy-D-ribose 5-phosphate aldolase</fullName>
    </alternativeName>
    <alternativeName>
        <fullName evidence="1">Phosphodeoxyriboaldolase</fullName>
        <shortName evidence="1">Deoxyriboaldolase</shortName>
    </alternativeName>
</protein>
<organism>
    <name type="scientific">Streptococcus pyogenes serotype M12 (strain MGAS2096)</name>
    <dbReference type="NCBI Taxonomy" id="370553"/>
    <lineage>
        <taxon>Bacteria</taxon>
        <taxon>Bacillati</taxon>
        <taxon>Bacillota</taxon>
        <taxon>Bacilli</taxon>
        <taxon>Lactobacillales</taxon>
        <taxon>Streptococcaceae</taxon>
        <taxon>Streptococcus</taxon>
    </lineage>
</organism>
<comment type="function">
    <text evidence="1">Catalyzes a reversible aldol reaction between acetaldehyde and D-glyceraldehyde 3-phosphate to generate 2-deoxy-D-ribose 5-phosphate.</text>
</comment>
<comment type="catalytic activity">
    <reaction evidence="1">
        <text>2-deoxy-D-ribose 5-phosphate = D-glyceraldehyde 3-phosphate + acetaldehyde</text>
        <dbReference type="Rhea" id="RHEA:12821"/>
        <dbReference type="ChEBI" id="CHEBI:15343"/>
        <dbReference type="ChEBI" id="CHEBI:59776"/>
        <dbReference type="ChEBI" id="CHEBI:62877"/>
        <dbReference type="EC" id="4.1.2.4"/>
    </reaction>
</comment>
<comment type="pathway">
    <text evidence="1">Carbohydrate degradation; 2-deoxy-D-ribose 1-phosphate degradation; D-glyceraldehyde 3-phosphate and acetaldehyde from 2-deoxy-alpha-D-ribose 1-phosphate: step 2/2.</text>
</comment>
<comment type="subcellular location">
    <subcellularLocation>
        <location evidence="1">Cytoplasm</location>
    </subcellularLocation>
</comment>
<comment type="similarity">
    <text evidence="1">Belongs to the DeoC/FbaB aldolase family. DeoC type 1 subfamily.</text>
</comment>
<accession>Q1J9Z9</accession>
<feature type="chain" id="PRO_1000015331" description="Deoxyribose-phosphate aldolase">
    <location>
        <begin position="1"/>
        <end position="223"/>
    </location>
</feature>
<feature type="active site" description="Proton donor/acceptor" evidence="1">
    <location>
        <position position="91"/>
    </location>
</feature>
<feature type="active site" description="Schiff-base intermediate with acetaldehyde" evidence="1">
    <location>
        <position position="153"/>
    </location>
</feature>
<feature type="active site" description="Proton donor/acceptor" evidence="1">
    <location>
        <position position="182"/>
    </location>
</feature>
<keyword id="KW-0963">Cytoplasm</keyword>
<keyword id="KW-0456">Lyase</keyword>
<keyword id="KW-0704">Schiff base</keyword>
<evidence type="ECO:0000255" key="1">
    <source>
        <dbReference type="HAMAP-Rule" id="MF_00114"/>
    </source>
</evidence>
<gene>
    <name evidence="1" type="primary">deoC</name>
    <name type="ordered locus">MGAS2096_Spy1610</name>
</gene>
<proteinExistence type="inferred from homology"/>
<sequence>MEVKDILKTVDHTLLATTATWPEIQTILDDAMAYETASACIPASYVKKAAEYVSGKLAICTVIGFPNGYSTTAAKVFECEDAIQNGADEIDMVINLTDVKNGDFDTVEEEIRQIKAKCQDHILKVIVETCQLTKEELIELCGVVTRSGADFIKTSTGFSTAGATFEDVEVMAKYVGEGVKIKAAGGISSLEDAETFIALGASRLGTSRIIKIVKNEAIKTDSY</sequence>
<dbReference type="EC" id="4.1.2.4" evidence="1"/>
<dbReference type="EMBL" id="CP000261">
    <property type="protein sequence ID" value="ABF36662.1"/>
    <property type="molecule type" value="Genomic_DNA"/>
</dbReference>
<dbReference type="SMR" id="Q1J9Z9"/>
<dbReference type="KEGG" id="spj:MGAS2096_Spy1610"/>
<dbReference type="HOGENOM" id="CLU_053595_0_2_9"/>
<dbReference type="UniPathway" id="UPA00002">
    <property type="reaction ID" value="UER00468"/>
</dbReference>
<dbReference type="GO" id="GO:0005737">
    <property type="term" value="C:cytoplasm"/>
    <property type="evidence" value="ECO:0007669"/>
    <property type="project" value="UniProtKB-SubCell"/>
</dbReference>
<dbReference type="GO" id="GO:0004139">
    <property type="term" value="F:deoxyribose-phosphate aldolase activity"/>
    <property type="evidence" value="ECO:0007669"/>
    <property type="project" value="UniProtKB-UniRule"/>
</dbReference>
<dbReference type="GO" id="GO:0006018">
    <property type="term" value="P:2-deoxyribose 1-phosphate catabolic process"/>
    <property type="evidence" value="ECO:0007669"/>
    <property type="project" value="UniProtKB-UniRule"/>
</dbReference>
<dbReference type="GO" id="GO:0016052">
    <property type="term" value="P:carbohydrate catabolic process"/>
    <property type="evidence" value="ECO:0007669"/>
    <property type="project" value="TreeGrafter"/>
</dbReference>
<dbReference type="GO" id="GO:0009264">
    <property type="term" value="P:deoxyribonucleotide catabolic process"/>
    <property type="evidence" value="ECO:0007669"/>
    <property type="project" value="InterPro"/>
</dbReference>
<dbReference type="CDD" id="cd00959">
    <property type="entry name" value="DeoC"/>
    <property type="match status" value="1"/>
</dbReference>
<dbReference type="FunFam" id="3.20.20.70:FF:000044">
    <property type="entry name" value="Deoxyribose-phosphate aldolase"/>
    <property type="match status" value="1"/>
</dbReference>
<dbReference type="Gene3D" id="3.20.20.70">
    <property type="entry name" value="Aldolase class I"/>
    <property type="match status" value="1"/>
</dbReference>
<dbReference type="HAMAP" id="MF_00114">
    <property type="entry name" value="DeoC_type1"/>
    <property type="match status" value="1"/>
</dbReference>
<dbReference type="InterPro" id="IPR013785">
    <property type="entry name" value="Aldolase_TIM"/>
</dbReference>
<dbReference type="InterPro" id="IPR011343">
    <property type="entry name" value="DeoC"/>
</dbReference>
<dbReference type="InterPro" id="IPR002915">
    <property type="entry name" value="DeoC/FbaB/LacD_aldolase"/>
</dbReference>
<dbReference type="InterPro" id="IPR028581">
    <property type="entry name" value="DeoC_typeI"/>
</dbReference>
<dbReference type="NCBIfam" id="TIGR00126">
    <property type="entry name" value="deoC"/>
    <property type="match status" value="1"/>
</dbReference>
<dbReference type="PANTHER" id="PTHR10889">
    <property type="entry name" value="DEOXYRIBOSE-PHOSPHATE ALDOLASE"/>
    <property type="match status" value="1"/>
</dbReference>
<dbReference type="PANTHER" id="PTHR10889:SF1">
    <property type="entry name" value="DEOXYRIBOSE-PHOSPHATE ALDOLASE"/>
    <property type="match status" value="1"/>
</dbReference>
<dbReference type="Pfam" id="PF01791">
    <property type="entry name" value="DeoC"/>
    <property type="match status" value="1"/>
</dbReference>
<dbReference type="PIRSF" id="PIRSF001357">
    <property type="entry name" value="DeoC"/>
    <property type="match status" value="1"/>
</dbReference>
<dbReference type="SMART" id="SM01133">
    <property type="entry name" value="DeoC"/>
    <property type="match status" value="1"/>
</dbReference>
<dbReference type="SUPFAM" id="SSF51569">
    <property type="entry name" value="Aldolase"/>
    <property type="match status" value="1"/>
</dbReference>